<comment type="function">
    <text evidence="1">Binds directly to 16S ribosomal RNA.</text>
</comment>
<comment type="similarity">
    <text evidence="1">Belongs to the bacterial ribosomal protein bS20 family.</text>
</comment>
<proteinExistence type="inferred from homology"/>
<dbReference type="EMBL" id="CP000764">
    <property type="protein sequence ID" value="ABS23275.1"/>
    <property type="molecule type" value="Genomic_DNA"/>
</dbReference>
<dbReference type="RefSeq" id="WP_012095513.1">
    <property type="nucleotide sequence ID" value="NC_009674.1"/>
</dbReference>
<dbReference type="SMR" id="A7GT17"/>
<dbReference type="STRING" id="315749.Bcer98_3049"/>
<dbReference type="GeneID" id="33898295"/>
<dbReference type="KEGG" id="bcy:Bcer98_3049"/>
<dbReference type="eggNOG" id="COG0268">
    <property type="taxonomic scope" value="Bacteria"/>
</dbReference>
<dbReference type="HOGENOM" id="CLU_160655_1_0_9"/>
<dbReference type="OrthoDB" id="9808392at2"/>
<dbReference type="Proteomes" id="UP000002300">
    <property type="component" value="Chromosome"/>
</dbReference>
<dbReference type="GO" id="GO:0005829">
    <property type="term" value="C:cytosol"/>
    <property type="evidence" value="ECO:0007669"/>
    <property type="project" value="TreeGrafter"/>
</dbReference>
<dbReference type="GO" id="GO:0015935">
    <property type="term" value="C:small ribosomal subunit"/>
    <property type="evidence" value="ECO:0007669"/>
    <property type="project" value="TreeGrafter"/>
</dbReference>
<dbReference type="GO" id="GO:0070181">
    <property type="term" value="F:small ribosomal subunit rRNA binding"/>
    <property type="evidence" value="ECO:0007669"/>
    <property type="project" value="TreeGrafter"/>
</dbReference>
<dbReference type="GO" id="GO:0003735">
    <property type="term" value="F:structural constituent of ribosome"/>
    <property type="evidence" value="ECO:0007669"/>
    <property type="project" value="InterPro"/>
</dbReference>
<dbReference type="GO" id="GO:0006412">
    <property type="term" value="P:translation"/>
    <property type="evidence" value="ECO:0007669"/>
    <property type="project" value="UniProtKB-UniRule"/>
</dbReference>
<dbReference type="FunFam" id="1.20.58.110:FF:000001">
    <property type="entry name" value="30S ribosomal protein S20"/>
    <property type="match status" value="1"/>
</dbReference>
<dbReference type="Gene3D" id="1.20.58.110">
    <property type="entry name" value="Ribosomal protein S20"/>
    <property type="match status" value="1"/>
</dbReference>
<dbReference type="HAMAP" id="MF_00500">
    <property type="entry name" value="Ribosomal_bS20"/>
    <property type="match status" value="1"/>
</dbReference>
<dbReference type="InterPro" id="IPR002583">
    <property type="entry name" value="Ribosomal_bS20"/>
</dbReference>
<dbReference type="InterPro" id="IPR036510">
    <property type="entry name" value="Ribosomal_bS20_sf"/>
</dbReference>
<dbReference type="NCBIfam" id="TIGR00029">
    <property type="entry name" value="S20"/>
    <property type="match status" value="1"/>
</dbReference>
<dbReference type="PANTHER" id="PTHR33398">
    <property type="entry name" value="30S RIBOSOMAL PROTEIN S20"/>
    <property type="match status" value="1"/>
</dbReference>
<dbReference type="PANTHER" id="PTHR33398:SF1">
    <property type="entry name" value="SMALL RIBOSOMAL SUBUNIT PROTEIN BS20C"/>
    <property type="match status" value="1"/>
</dbReference>
<dbReference type="Pfam" id="PF01649">
    <property type="entry name" value="Ribosomal_S20p"/>
    <property type="match status" value="1"/>
</dbReference>
<dbReference type="SUPFAM" id="SSF46992">
    <property type="entry name" value="Ribosomal protein S20"/>
    <property type="match status" value="1"/>
</dbReference>
<sequence>MANIKSAIKRAKLSEERRAHNASIKSDMRTAVKTVEALVSNNDLENAKEAFKTASKKLDKAARKGLIHQNAAARQKSRLAKKVNA</sequence>
<name>RS20_BACCN</name>
<accession>A7GT17</accession>
<gene>
    <name evidence="1" type="primary">rpsT</name>
    <name type="ordered locus">Bcer98_3049</name>
</gene>
<organism>
    <name type="scientific">Bacillus cytotoxicus (strain DSM 22905 / CIP 110041 / 391-98 / NVH 391-98)</name>
    <dbReference type="NCBI Taxonomy" id="315749"/>
    <lineage>
        <taxon>Bacteria</taxon>
        <taxon>Bacillati</taxon>
        <taxon>Bacillota</taxon>
        <taxon>Bacilli</taxon>
        <taxon>Bacillales</taxon>
        <taxon>Bacillaceae</taxon>
        <taxon>Bacillus</taxon>
        <taxon>Bacillus cereus group</taxon>
    </lineage>
</organism>
<reference key="1">
    <citation type="journal article" date="2008" name="Chem. Biol. Interact.">
        <title>Extending the Bacillus cereus group genomics to putative food-borne pathogens of different toxicity.</title>
        <authorList>
            <person name="Lapidus A."/>
            <person name="Goltsman E."/>
            <person name="Auger S."/>
            <person name="Galleron N."/>
            <person name="Segurens B."/>
            <person name="Dossat C."/>
            <person name="Land M.L."/>
            <person name="Broussolle V."/>
            <person name="Brillard J."/>
            <person name="Guinebretiere M.-H."/>
            <person name="Sanchis V."/>
            <person name="Nguen-the C."/>
            <person name="Lereclus D."/>
            <person name="Richardson P."/>
            <person name="Wincker P."/>
            <person name="Weissenbach J."/>
            <person name="Ehrlich S.D."/>
            <person name="Sorokin A."/>
        </authorList>
    </citation>
    <scope>NUCLEOTIDE SEQUENCE [LARGE SCALE GENOMIC DNA]</scope>
    <source>
        <strain>DSM 22905 / CIP 110041 / 391-98 / NVH 391-98</strain>
    </source>
</reference>
<feature type="chain" id="PRO_1000081414" description="Small ribosomal subunit protein bS20">
    <location>
        <begin position="1"/>
        <end position="85"/>
    </location>
</feature>
<feature type="region of interest" description="Disordered" evidence="2">
    <location>
        <begin position="1"/>
        <end position="22"/>
    </location>
</feature>
<protein>
    <recommendedName>
        <fullName evidence="1">Small ribosomal subunit protein bS20</fullName>
    </recommendedName>
    <alternativeName>
        <fullName evidence="3">30S ribosomal protein S20</fullName>
    </alternativeName>
</protein>
<keyword id="KW-0687">Ribonucleoprotein</keyword>
<keyword id="KW-0689">Ribosomal protein</keyword>
<keyword id="KW-0694">RNA-binding</keyword>
<keyword id="KW-0699">rRNA-binding</keyword>
<evidence type="ECO:0000255" key="1">
    <source>
        <dbReference type="HAMAP-Rule" id="MF_00500"/>
    </source>
</evidence>
<evidence type="ECO:0000256" key="2">
    <source>
        <dbReference type="SAM" id="MobiDB-lite"/>
    </source>
</evidence>
<evidence type="ECO:0000305" key="3"/>